<protein>
    <recommendedName>
        <fullName evidence="1">D-alanyl carrier protein</fullName>
        <shortName evidence="1">DCP</shortName>
    </recommendedName>
    <alternativeName>
        <fullName evidence="1">D-alanine--poly(phosphoribitol) ligase subunit 2</fullName>
    </alternativeName>
</protein>
<gene>
    <name evidence="1" type="primary">dltC</name>
    <name type="ordered locus">MW0816</name>
</gene>
<name>DLTC_STAAW</name>
<reference key="1">
    <citation type="journal article" date="2002" name="Lancet">
        <title>Genome and virulence determinants of high virulence community-acquired MRSA.</title>
        <authorList>
            <person name="Baba T."/>
            <person name="Takeuchi F."/>
            <person name="Kuroda M."/>
            <person name="Yuzawa H."/>
            <person name="Aoki K."/>
            <person name="Oguchi A."/>
            <person name="Nagai Y."/>
            <person name="Iwama N."/>
            <person name="Asano K."/>
            <person name="Naimi T."/>
            <person name="Kuroda H."/>
            <person name="Cui L."/>
            <person name="Yamamoto K."/>
            <person name="Hiramatsu K."/>
        </authorList>
    </citation>
    <scope>NUCLEOTIDE SEQUENCE [LARGE SCALE GENOMIC DNA]</scope>
    <source>
        <strain>MW2</strain>
    </source>
</reference>
<accession>P0A020</accession>
<accession>Q53663</accession>
<feature type="chain" id="PRO_0000213102" description="D-alanyl carrier protein">
    <location>
        <begin position="1"/>
        <end position="78"/>
    </location>
</feature>
<feature type="domain" description="Carrier" evidence="1">
    <location>
        <begin position="1"/>
        <end position="78"/>
    </location>
</feature>
<feature type="modified residue" description="O-(pantetheine 4'-phosphoryl)serine" evidence="1">
    <location>
        <position position="36"/>
    </location>
</feature>
<dbReference type="EMBL" id="BA000033">
    <property type="protein sequence ID" value="BAB94681.1"/>
    <property type="molecule type" value="Genomic_DNA"/>
</dbReference>
<dbReference type="RefSeq" id="WP_000395692.1">
    <property type="nucleotide sequence ID" value="NC_003923.1"/>
</dbReference>
<dbReference type="SMR" id="P0A020"/>
<dbReference type="GeneID" id="98345253"/>
<dbReference type="KEGG" id="sam:MW0816"/>
<dbReference type="HOGENOM" id="CLU_108696_19_0_9"/>
<dbReference type="UniPathway" id="UPA00556"/>
<dbReference type="GO" id="GO:0005737">
    <property type="term" value="C:cytoplasm"/>
    <property type="evidence" value="ECO:0007669"/>
    <property type="project" value="UniProtKB-SubCell"/>
</dbReference>
<dbReference type="GO" id="GO:0036370">
    <property type="term" value="F:D-alanyl carrier activity"/>
    <property type="evidence" value="ECO:0007669"/>
    <property type="project" value="UniProtKB-UniRule"/>
</dbReference>
<dbReference type="GO" id="GO:0071555">
    <property type="term" value="P:cell wall organization"/>
    <property type="evidence" value="ECO:0007669"/>
    <property type="project" value="UniProtKB-KW"/>
</dbReference>
<dbReference type="GO" id="GO:0070395">
    <property type="term" value="P:lipoteichoic acid biosynthetic process"/>
    <property type="evidence" value="ECO:0007669"/>
    <property type="project" value="UniProtKB-UniRule"/>
</dbReference>
<dbReference type="Gene3D" id="1.10.1200.10">
    <property type="entry name" value="ACP-like"/>
    <property type="match status" value="1"/>
</dbReference>
<dbReference type="HAMAP" id="MF_00565">
    <property type="entry name" value="DltC"/>
    <property type="match status" value="1"/>
</dbReference>
<dbReference type="InterPro" id="IPR036736">
    <property type="entry name" value="ACP-like_sf"/>
</dbReference>
<dbReference type="InterPro" id="IPR003230">
    <property type="entry name" value="DltC"/>
</dbReference>
<dbReference type="InterPro" id="IPR009081">
    <property type="entry name" value="PP-bd_ACP"/>
</dbReference>
<dbReference type="NCBIfam" id="TIGR01688">
    <property type="entry name" value="dltC"/>
    <property type="match status" value="1"/>
</dbReference>
<dbReference type="NCBIfam" id="NF003464">
    <property type="entry name" value="PRK05087.1"/>
    <property type="match status" value="1"/>
</dbReference>
<dbReference type="Pfam" id="PF00550">
    <property type="entry name" value="PP-binding"/>
    <property type="match status" value="1"/>
</dbReference>
<dbReference type="SUPFAM" id="SSF47336">
    <property type="entry name" value="ACP-like"/>
    <property type="match status" value="1"/>
</dbReference>
<dbReference type="PROSITE" id="PS50075">
    <property type="entry name" value="CARRIER"/>
    <property type="match status" value="1"/>
</dbReference>
<sequence length="78" mass="9063">MEFREQVLNLLAEVAENDIVKENPDVEIFEEGIIDSFQTVGLLLEIQNKLDIEVSIMDFDRDEWATPNKIVEALEELR</sequence>
<keyword id="KW-0961">Cell wall biogenesis/degradation</keyword>
<keyword id="KW-0963">Cytoplasm</keyword>
<keyword id="KW-0596">Phosphopantetheine</keyword>
<keyword id="KW-0597">Phosphoprotein</keyword>
<organism>
    <name type="scientific">Staphylococcus aureus (strain MW2)</name>
    <dbReference type="NCBI Taxonomy" id="196620"/>
    <lineage>
        <taxon>Bacteria</taxon>
        <taxon>Bacillati</taxon>
        <taxon>Bacillota</taxon>
        <taxon>Bacilli</taxon>
        <taxon>Bacillales</taxon>
        <taxon>Staphylococcaceae</taxon>
        <taxon>Staphylococcus</taxon>
    </lineage>
</organism>
<proteinExistence type="inferred from homology"/>
<evidence type="ECO:0000255" key="1">
    <source>
        <dbReference type="HAMAP-Rule" id="MF_00565"/>
    </source>
</evidence>
<comment type="function">
    <text evidence="1">Carrier protein involved in the D-alanylation of lipoteichoic acid (LTA). The loading of thioester-linked D-alanine onto DltC is catalyzed by D-alanine--D-alanyl carrier protein ligase DltA. The DltC-carried D-alanyl group is further transferred to cell membrane phosphatidylglycerol (PG) by forming an ester bond, probably catalyzed by DltD. D-alanylation of LTA plays an important role in modulating the properties of the cell wall in Gram-positive bacteria, influencing the net charge of the cell wall.</text>
</comment>
<comment type="pathway">
    <text evidence="1">Cell wall biogenesis; lipoteichoic acid biosynthesis.</text>
</comment>
<comment type="subcellular location">
    <subcellularLocation>
        <location evidence="1">Cytoplasm</location>
    </subcellularLocation>
</comment>
<comment type="PTM">
    <text evidence="1">4'-phosphopantetheine is transferred from CoA to a specific serine of apo-DCP.</text>
</comment>
<comment type="similarity">
    <text evidence="1">Belongs to the DltC family.</text>
</comment>